<sequence length="213" mass="23837">MNKNFEYPEIASLEQPAKKLVVLLHGVGSDGHDLIGLVPYIKDDLPDCHFISPHGIEPYDMAPYGRQWFSLQDRSPDNISKLLVKNISKLDDIIKQKQEELNLTNKDTIIIGFSQGTMIGLYLTLIQKEPFYCTVGFSGALIPPAEINNKTTPICLIHGELDDVVSVNEMYNASHYLSKYHIPHSGHKLTRLSHSIDGRGIEIAVNFICHTVA</sequence>
<evidence type="ECO:0000250" key="1"/>
<evidence type="ECO:0000305" key="2"/>
<gene>
    <name type="ordered locus">RBE_1307</name>
</gene>
<organism>
    <name type="scientific">Rickettsia bellii (strain RML369-C)</name>
    <dbReference type="NCBI Taxonomy" id="336407"/>
    <lineage>
        <taxon>Bacteria</taxon>
        <taxon>Pseudomonadati</taxon>
        <taxon>Pseudomonadota</taxon>
        <taxon>Alphaproteobacteria</taxon>
        <taxon>Rickettsiales</taxon>
        <taxon>Rickettsiaceae</taxon>
        <taxon>Rickettsieae</taxon>
        <taxon>Rickettsia</taxon>
        <taxon>belli group</taxon>
    </lineage>
</organism>
<dbReference type="EC" id="3.1.-.-"/>
<dbReference type="EMBL" id="CP000087">
    <property type="protein sequence ID" value="ABE05388.1"/>
    <property type="molecule type" value="Genomic_DNA"/>
</dbReference>
<dbReference type="RefSeq" id="WP_011477958.1">
    <property type="nucleotide sequence ID" value="NC_007940.1"/>
</dbReference>
<dbReference type="SMR" id="Q1RGX6"/>
<dbReference type="ESTHER" id="ricbr-Y1307">
    <property type="family name" value="LYsophospholipase_carboxylesterase"/>
</dbReference>
<dbReference type="KEGG" id="rbe:RBE_1307"/>
<dbReference type="eggNOG" id="COG0400">
    <property type="taxonomic scope" value="Bacteria"/>
</dbReference>
<dbReference type="HOGENOM" id="CLU_049413_5_2_5"/>
<dbReference type="OrthoDB" id="9801763at2"/>
<dbReference type="Proteomes" id="UP000001951">
    <property type="component" value="Chromosome"/>
</dbReference>
<dbReference type="GO" id="GO:0016787">
    <property type="term" value="F:hydrolase activity"/>
    <property type="evidence" value="ECO:0007669"/>
    <property type="project" value="UniProtKB-KW"/>
</dbReference>
<dbReference type="Gene3D" id="3.40.50.1820">
    <property type="entry name" value="alpha/beta hydrolase"/>
    <property type="match status" value="1"/>
</dbReference>
<dbReference type="InterPro" id="IPR029058">
    <property type="entry name" value="AB_hydrolase_fold"/>
</dbReference>
<dbReference type="InterPro" id="IPR050565">
    <property type="entry name" value="LYPA1-2/EST-like"/>
</dbReference>
<dbReference type="InterPro" id="IPR003140">
    <property type="entry name" value="PLipase/COase/thioEstase"/>
</dbReference>
<dbReference type="PANTHER" id="PTHR10655:SF17">
    <property type="entry name" value="LYSOPHOSPHOLIPASE-LIKE PROTEIN 1"/>
    <property type="match status" value="1"/>
</dbReference>
<dbReference type="PANTHER" id="PTHR10655">
    <property type="entry name" value="LYSOPHOSPHOLIPASE-RELATED"/>
    <property type="match status" value="1"/>
</dbReference>
<dbReference type="Pfam" id="PF02230">
    <property type="entry name" value="Abhydrolase_2"/>
    <property type="match status" value="1"/>
</dbReference>
<dbReference type="SUPFAM" id="SSF53474">
    <property type="entry name" value="alpha/beta-Hydrolases"/>
    <property type="match status" value="1"/>
</dbReference>
<feature type="chain" id="PRO_0000272338" description="Uncharacterized hydrolase RBE_1307">
    <location>
        <begin position="1"/>
        <end position="213"/>
    </location>
</feature>
<feature type="active site" description="Charge relay system" evidence="1">
    <location>
        <position position="114"/>
    </location>
</feature>
<feature type="active site" description="Charge relay system" evidence="1">
    <location>
        <position position="162"/>
    </location>
</feature>
<feature type="active site" description="Charge relay system" evidence="1">
    <location>
        <position position="194"/>
    </location>
</feature>
<protein>
    <recommendedName>
        <fullName>Uncharacterized hydrolase RBE_1307</fullName>
        <ecNumber>3.1.-.-</ecNumber>
    </recommendedName>
</protein>
<name>Y1307_RICBR</name>
<reference key="1">
    <citation type="journal article" date="2006" name="PLoS Genet.">
        <title>Genome sequence of Rickettsia bellii illuminates the role of amoebae in gene exchanges between intracellular pathogens.</title>
        <authorList>
            <person name="Ogata H."/>
            <person name="La Scola B."/>
            <person name="Audic S."/>
            <person name="Renesto P."/>
            <person name="Blanc G."/>
            <person name="Robert C."/>
            <person name="Fournier P.-E."/>
            <person name="Claverie J.-M."/>
            <person name="Raoult D."/>
        </authorList>
    </citation>
    <scope>NUCLEOTIDE SEQUENCE [LARGE SCALE GENOMIC DNA]</scope>
    <source>
        <strain>RML369-C</strain>
    </source>
</reference>
<proteinExistence type="inferred from homology"/>
<comment type="similarity">
    <text evidence="2">Belongs to the AB hydrolase superfamily. AB hydrolase 2 family.</text>
</comment>
<accession>Q1RGX6</accession>
<keyword id="KW-0378">Hydrolase</keyword>